<organism>
    <name type="scientific">Shewanella amazonensis (strain ATCC BAA-1098 / SB2B)</name>
    <dbReference type="NCBI Taxonomy" id="326297"/>
    <lineage>
        <taxon>Bacteria</taxon>
        <taxon>Pseudomonadati</taxon>
        <taxon>Pseudomonadota</taxon>
        <taxon>Gammaproteobacteria</taxon>
        <taxon>Alteromonadales</taxon>
        <taxon>Shewanellaceae</taxon>
        <taxon>Shewanella</taxon>
    </lineage>
</organism>
<name>DAPD_SHEAM</name>
<feature type="chain" id="PRO_1000047180" description="2,3,4,5-tetrahydropyridine-2,6-dicarboxylate N-succinyltransferase">
    <location>
        <begin position="1"/>
        <end position="274"/>
    </location>
</feature>
<feature type="binding site" evidence="1">
    <location>
        <position position="104"/>
    </location>
    <ligand>
        <name>substrate</name>
    </ligand>
</feature>
<feature type="binding site" evidence="1">
    <location>
        <position position="141"/>
    </location>
    <ligand>
        <name>substrate</name>
    </ligand>
</feature>
<gene>
    <name evidence="1" type="primary">dapD</name>
    <name type="ordered locus">Sama_1136</name>
</gene>
<evidence type="ECO:0000255" key="1">
    <source>
        <dbReference type="HAMAP-Rule" id="MF_00811"/>
    </source>
</evidence>
<proteinExistence type="inferred from homology"/>
<accession>A1S4N7</accession>
<comment type="catalytic activity">
    <reaction evidence="1">
        <text>(S)-2,3,4,5-tetrahydrodipicolinate + succinyl-CoA + H2O = (S)-2-succinylamino-6-oxoheptanedioate + CoA</text>
        <dbReference type="Rhea" id="RHEA:17325"/>
        <dbReference type="ChEBI" id="CHEBI:15377"/>
        <dbReference type="ChEBI" id="CHEBI:15685"/>
        <dbReference type="ChEBI" id="CHEBI:16845"/>
        <dbReference type="ChEBI" id="CHEBI:57287"/>
        <dbReference type="ChEBI" id="CHEBI:57292"/>
        <dbReference type="EC" id="2.3.1.117"/>
    </reaction>
</comment>
<comment type="pathway">
    <text evidence="1">Amino-acid biosynthesis; L-lysine biosynthesis via DAP pathway; LL-2,6-diaminopimelate from (S)-tetrahydrodipicolinate (succinylase route): step 1/3.</text>
</comment>
<comment type="subunit">
    <text evidence="1">Homotrimer.</text>
</comment>
<comment type="subcellular location">
    <subcellularLocation>
        <location evidence="1">Cytoplasm</location>
    </subcellularLocation>
</comment>
<comment type="similarity">
    <text evidence="1">Belongs to the transferase hexapeptide repeat family.</text>
</comment>
<dbReference type="EC" id="2.3.1.117" evidence="1"/>
<dbReference type="EMBL" id="CP000507">
    <property type="protein sequence ID" value="ABL99343.1"/>
    <property type="molecule type" value="Genomic_DNA"/>
</dbReference>
<dbReference type="RefSeq" id="WP_011759252.1">
    <property type="nucleotide sequence ID" value="NC_008700.1"/>
</dbReference>
<dbReference type="SMR" id="A1S4N7"/>
<dbReference type="STRING" id="326297.Sama_1136"/>
<dbReference type="KEGG" id="saz:Sama_1136"/>
<dbReference type="eggNOG" id="COG2171">
    <property type="taxonomic scope" value="Bacteria"/>
</dbReference>
<dbReference type="HOGENOM" id="CLU_050859_0_1_6"/>
<dbReference type="OrthoDB" id="9775362at2"/>
<dbReference type="UniPathway" id="UPA00034">
    <property type="reaction ID" value="UER00019"/>
</dbReference>
<dbReference type="Proteomes" id="UP000009175">
    <property type="component" value="Chromosome"/>
</dbReference>
<dbReference type="GO" id="GO:0005737">
    <property type="term" value="C:cytoplasm"/>
    <property type="evidence" value="ECO:0007669"/>
    <property type="project" value="UniProtKB-SubCell"/>
</dbReference>
<dbReference type="GO" id="GO:0008666">
    <property type="term" value="F:2,3,4,5-tetrahydropyridine-2,6-dicarboxylate N-succinyltransferase activity"/>
    <property type="evidence" value="ECO:0007669"/>
    <property type="project" value="UniProtKB-UniRule"/>
</dbReference>
<dbReference type="GO" id="GO:0016779">
    <property type="term" value="F:nucleotidyltransferase activity"/>
    <property type="evidence" value="ECO:0007669"/>
    <property type="project" value="TreeGrafter"/>
</dbReference>
<dbReference type="GO" id="GO:0019877">
    <property type="term" value="P:diaminopimelate biosynthetic process"/>
    <property type="evidence" value="ECO:0007669"/>
    <property type="project" value="UniProtKB-UniRule"/>
</dbReference>
<dbReference type="GO" id="GO:0009089">
    <property type="term" value="P:lysine biosynthetic process via diaminopimelate"/>
    <property type="evidence" value="ECO:0007669"/>
    <property type="project" value="UniProtKB-UniRule"/>
</dbReference>
<dbReference type="CDD" id="cd03350">
    <property type="entry name" value="LbH_THP_succinylT"/>
    <property type="match status" value="1"/>
</dbReference>
<dbReference type="Gene3D" id="2.160.10.10">
    <property type="entry name" value="Hexapeptide repeat proteins"/>
    <property type="match status" value="1"/>
</dbReference>
<dbReference type="Gene3D" id="1.10.166.10">
    <property type="entry name" value="Tetrahydrodipicolinate-N-succinyltransferase, N-terminal domain"/>
    <property type="match status" value="1"/>
</dbReference>
<dbReference type="HAMAP" id="MF_00811">
    <property type="entry name" value="DapD"/>
    <property type="match status" value="1"/>
</dbReference>
<dbReference type="InterPro" id="IPR005664">
    <property type="entry name" value="DapD_Trfase_Hexpep_rpt_fam"/>
</dbReference>
<dbReference type="InterPro" id="IPR001451">
    <property type="entry name" value="Hexapep"/>
</dbReference>
<dbReference type="InterPro" id="IPR018357">
    <property type="entry name" value="Hexapep_transf_CS"/>
</dbReference>
<dbReference type="InterPro" id="IPR023180">
    <property type="entry name" value="THP_succinylTrfase_dom1"/>
</dbReference>
<dbReference type="InterPro" id="IPR037133">
    <property type="entry name" value="THP_succinylTrfase_N_sf"/>
</dbReference>
<dbReference type="InterPro" id="IPR011004">
    <property type="entry name" value="Trimer_LpxA-like_sf"/>
</dbReference>
<dbReference type="NCBIfam" id="TIGR00965">
    <property type="entry name" value="dapD"/>
    <property type="match status" value="1"/>
</dbReference>
<dbReference type="NCBIfam" id="NF008808">
    <property type="entry name" value="PRK11830.1"/>
    <property type="match status" value="1"/>
</dbReference>
<dbReference type="PANTHER" id="PTHR19136:SF52">
    <property type="entry name" value="2,3,4,5-TETRAHYDROPYRIDINE-2,6-DICARBOXYLATE N-SUCCINYLTRANSFERASE"/>
    <property type="match status" value="1"/>
</dbReference>
<dbReference type="PANTHER" id="PTHR19136">
    <property type="entry name" value="MOLYBDENUM COFACTOR GUANYLYLTRANSFERASE"/>
    <property type="match status" value="1"/>
</dbReference>
<dbReference type="Pfam" id="PF14602">
    <property type="entry name" value="Hexapep_2"/>
    <property type="match status" value="1"/>
</dbReference>
<dbReference type="Pfam" id="PF14805">
    <property type="entry name" value="THDPS_N_2"/>
    <property type="match status" value="1"/>
</dbReference>
<dbReference type="SUPFAM" id="SSF51161">
    <property type="entry name" value="Trimeric LpxA-like enzymes"/>
    <property type="match status" value="1"/>
</dbReference>
<dbReference type="PROSITE" id="PS00101">
    <property type="entry name" value="HEXAPEP_TRANSFERASES"/>
    <property type="match status" value="1"/>
</dbReference>
<protein>
    <recommendedName>
        <fullName evidence="1">2,3,4,5-tetrahydropyridine-2,6-dicarboxylate N-succinyltransferase</fullName>
        <ecNumber evidence="1">2.3.1.117</ecNumber>
    </recommendedName>
    <alternativeName>
        <fullName evidence="1">Tetrahydrodipicolinate N-succinyltransferase</fullName>
        <shortName evidence="1">THDP succinyltransferase</shortName>
        <shortName evidence="1">THP succinyltransferase</shortName>
        <shortName evidence="1">Tetrahydropicolinate succinylase</shortName>
    </alternativeName>
</protein>
<sequence>MEALRQRIEAAFEARANITPSSVEPGVRADVETVINMLDKGEMRVAEKIDGQWHVNQWLKKAVLLSFRIFDNGVIEGGETKYFDKVPMKFADYDEARFRAEAIRVVPPAAVRKGSFIGKNTVLMPSYVNLGAYVDEGTMVDTWATVGSCAQIGKNVHLSGGVGIGGVLEPLQAGPTIIEDNCFIGARSEIVEGVVVEEGSVISMGVYIGQSTRIYDRETGEIHYGRVPAGSVVVSGTLPSSCGKYNLYAAIIVKKVDEKTRGKVGINELLRIVD</sequence>
<reference key="1">
    <citation type="submission" date="2006-12" db="EMBL/GenBank/DDBJ databases">
        <title>Complete sequence of Shewanella amazonensis SB2B.</title>
        <authorList>
            <consortium name="US DOE Joint Genome Institute"/>
            <person name="Copeland A."/>
            <person name="Lucas S."/>
            <person name="Lapidus A."/>
            <person name="Barry K."/>
            <person name="Detter J.C."/>
            <person name="Glavina del Rio T."/>
            <person name="Hammon N."/>
            <person name="Israni S."/>
            <person name="Dalin E."/>
            <person name="Tice H."/>
            <person name="Pitluck S."/>
            <person name="Munk A.C."/>
            <person name="Brettin T."/>
            <person name="Bruce D."/>
            <person name="Han C."/>
            <person name="Tapia R."/>
            <person name="Gilna P."/>
            <person name="Schmutz J."/>
            <person name="Larimer F."/>
            <person name="Land M."/>
            <person name="Hauser L."/>
            <person name="Kyrpides N."/>
            <person name="Mikhailova N."/>
            <person name="Fredrickson J."/>
            <person name="Richardson P."/>
        </authorList>
    </citation>
    <scope>NUCLEOTIDE SEQUENCE [LARGE SCALE GENOMIC DNA]</scope>
    <source>
        <strain>ATCC BAA-1098 / SB2B</strain>
    </source>
</reference>
<keyword id="KW-0012">Acyltransferase</keyword>
<keyword id="KW-0028">Amino-acid biosynthesis</keyword>
<keyword id="KW-0963">Cytoplasm</keyword>
<keyword id="KW-0220">Diaminopimelate biosynthesis</keyword>
<keyword id="KW-0457">Lysine biosynthesis</keyword>
<keyword id="KW-1185">Reference proteome</keyword>
<keyword id="KW-0677">Repeat</keyword>
<keyword id="KW-0808">Transferase</keyword>